<keyword id="KW-0053">Apoptosis</keyword>
<keyword id="KW-0963">Cytoplasm</keyword>
<keyword id="KW-0206">Cytoskeleton</keyword>
<keyword id="KW-0324">Glycolysis</keyword>
<keyword id="KW-0520">NAD</keyword>
<keyword id="KW-0539">Nucleus</keyword>
<keyword id="KW-0560">Oxidoreductase</keyword>
<keyword id="KW-1185">Reference proteome</keyword>
<keyword id="KW-0702">S-nitrosylation</keyword>
<keyword id="KW-0808">Transferase</keyword>
<protein>
    <recommendedName>
        <fullName>Glyceraldehyde-3-phosphate dehydrogenase</fullName>
        <shortName>GAPDH</shortName>
        <ecNumber evidence="1">1.2.1.12</ecNumber>
    </recommendedName>
    <alternativeName>
        <fullName evidence="5">Peptidyl-cysteine S-nitrosylase GAPDH</fullName>
        <ecNumber evidence="2">2.6.99.-</ecNumber>
    </alternativeName>
</protein>
<accession>Q5R2J2</accession>
<sequence>MVKIGVNGFGRIGRLVTRAAFTCDKVQIVAINDPFIDLNYMVYMFKYDSTHGRFHGTVKAENGKLVINGQAITIFQERDPANIKWGDAGAEYVVESTGVFTTTEKASAHLKGGAKRVVISAPSADAPMFVMGVNHEKYDNSLKVVSNASCTTNCLAPLAKVIHDNYGMVEGLMTTVHAITATQKTVDGPSGKLWRDGRGAAQNIIPASTGAAKAVGKVIPELNGKLTGMAFRVPTPNVSVVDLTCRLQKPAKYDDIKKVMKAASEGPLKGILGYTEDQVVSSDFNGDSRSSIFDAAAGIALNDNFVKLVSWYDNEFGYSNRVVDLLVHMASKE</sequence>
<reference key="1">
    <citation type="journal article" date="2005" name="Evol. Dev.">
        <title>Comprehensive survey of carapacial ridge-specific genes in turtle implies co-option of some regulatory genes in carapace evolution.</title>
        <authorList>
            <person name="Kuraku S."/>
            <person name="Usuda R."/>
            <person name="Kuratani S."/>
        </authorList>
    </citation>
    <scope>NUCLEOTIDE SEQUENCE [MRNA]</scope>
</reference>
<dbReference type="EC" id="1.2.1.12" evidence="1"/>
<dbReference type="EC" id="2.6.99.-" evidence="2"/>
<dbReference type="EMBL" id="AB124567">
    <property type="protein sequence ID" value="BAD74117.1"/>
    <property type="molecule type" value="mRNA"/>
</dbReference>
<dbReference type="RefSeq" id="NP_001273856.1">
    <property type="nucleotide sequence ID" value="NM_001286927.1"/>
</dbReference>
<dbReference type="SMR" id="Q5R2J2"/>
<dbReference type="STRING" id="13735.ENSPSIP00000018395"/>
<dbReference type="GeneID" id="102462433"/>
<dbReference type="KEGG" id="pss:102462433"/>
<dbReference type="CTD" id="2597"/>
<dbReference type="eggNOG" id="KOG0657">
    <property type="taxonomic scope" value="Eukaryota"/>
</dbReference>
<dbReference type="OrthoDB" id="1152826at2759"/>
<dbReference type="UniPathway" id="UPA00109">
    <property type="reaction ID" value="UER00184"/>
</dbReference>
<dbReference type="Proteomes" id="UP000007267">
    <property type="component" value="Unassembled WGS sequence"/>
</dbReference>
<dbReference type="GO" id="GO:0005737">
    <property type="term" value="C:cytoplasm"/>
    <property type="evidence" value="ECO:0000250"/>
    <property type="project" value="UniProtKB"/>
</dbReference>
<dbReference type="GO" id="GO:0005829">
    <property type="term" value="C:cytosol"/>
    <property type="evidence" value="ECO:0000250"/>
    <property type="project" value="UniProtKB"/>
</dbReference>
<dbReference type="GO" id="GO:0015630">
    <property type="term" value="C:microtubule cytoskeleton"/>
    <property type="evidence" value="ECO:0000250"/>
    <property type="project" value="UniProtKB"/>
</dbReference>
<dbReference type="GO" id="GO:0005634">
    <property type="term" value="C:nucleus"/>
    <property type="evidence" value="ECO:0000250"/>
    <property type="project" value="UniProtKB"/>
</dbReference>
<dbReference type="GO" id="GO:0004365">
    <property type="term" value="F:glyceraldehyde-3-phosphate dehydrogenase (NAD+) (phosphorylating) activity"/>
    <property type="evidence" value="ECO:0000250"/>
    <property type="project" value="UniProtKB"/>
</dbReference>
<dbReference type="GO" id="GO:0008017">
    <property type="term" value="F:microtubule binding"/>
    <property type="evidence" value="ECO:0000250"/>
    <property type="project" value="UniProtKB"/>
</dbReference>
<dbReference type="GO" id="GO:0051287">
    <property type="term" value="F:NAD binding"/>
    <property type="evidence" value="ECO:0007669"/>
    <property type="project" value="InterPro"/>
</dbReference>
<dbReference type="GO" id="GO:0050661">
    <property type="term" value="F:NADP binding"/>
    <property type="evidence" value="ECO:0007669"/>
    <property type="project" value="InterPro"/>
</dbReference>
<dbReference type="GO" id="GO:0035605">
    <property type="term" value="F:peptidyl-cysteine S-nitrosylase activity"/>
    <property type="evidence" value="ECO:0000250"/>
    <property type="project" value="UniProtKB"/>
</dbReference>
<dbReference type="GO" id="GO:0006006">
    <property type="term" value="P:glucose metabolic process"/>
    <property type="evidence" value="ECO:0007669"/>
    <property type="project" value="InterPro"/>
</dbReference>
<dbReference type="GO" id="GO:0006096">
    <property type="term" value="P:glycolytic process"/>
    <property type="evidence" value="ECO:0007669"/>
    <property type="project" value="UniProtKB-UniPathway"/>
</dbReference>
<dbReference type="GO" id="GO:0000226">
    <property type="term" value="P:microtubule cytoskeleton organization"/>
    <property type="evidence" value="ECO:0000250"/>
    <property type="project" value="UniProtKB"/>
</dbReference>
<dbReference type="GO" id="GO:0051402">
    <property type="term" value="P:neuron apoptotic process"/>
    <property type="evidence" value="ECO:0000250"/>
    <property type="project" value="UniProtKB"/>
</dbReference>
<dbReference type="GO" id="GO:0035606">
    <property type="term" value="P:peptidyl-cysteine S-trans-nitrosylation"/>
    <property type="evidence" value="ECO:0000250"/>
    <property type="project" value="UniProtKB"/>
</dbReference>
<dbReference type="GO" id="GO:0043123">
    <property type="term" value="P:positive regulation of canonical NF-kappaB signal transduction"/>
    <property type="evidence" value="ECO:0000250"/>
    <property type="project" value="UniProtKB"/>
</dbReference>
<dbReference type="GO" id="GO:0032481">
    <property type="term" value="P:positive regulation of type I interferon production"/>
    <property type="evidence" value="ECO:0000250"/>
    <property type="project" value="UniProtKB"/>
</dbReference>
<dbReference type="GO" id="GO:0050821">
    <property type="term" value="P:protein stabilization"/>
    <property type="evidence" value="ECO:0000250"/>
    <property type="project" value="UniProtKB"/>
</dbReference>
<dbReference type="CDD" id="cd18126">
    <property type="entry name" value="GAPDH_I_C"/>
    <property type="match status" value="1"/>
</dbReference>
<dbReference type="CDD" id="cd05214">
    <property type="entry name" value="GAPDH_I_N"/>
    <property type="match status" value="1"/>
</dbReference>
<dbReference type="FunFam" id="3.30.360.10:FF:000001">
    <property type="entry name" value="Glyceraldehyde-3-phosphate dehydrogenase"/>
    <property type="match status" value="1"/>
</dbReference>
<dbReference type="FunFam" id="3.40.50.720:FF:001161">
    <property type="entry name" value="Glyceraldehyde-3-phosphate dehydrogenase"/>
    <property type="match status" value="1"/>
</dbReference>
<dbReference type="Gene3D" id="3.30.360.10">
    <property type="entry name" value="Dihydrodipicolinate Reductase, domain 2"/>
    <property type="match status" value="1"/>
</dbReference>
<dbReference type="Gene3D" id="3.40.50.720">
    <property type="entry name" value="NAD(P)-binding Rossmann-like Domain"/>
    <property type="match status" value="1"/>
</dbReference>
<dbReference type="InterPro" id="IPR020831">
    <property type="entry name" value="GlycerAld/Erythrose_P_DH"/>
</dbReference>
<dbReference type="InterPro" id="IPR020830">
    <property type="entry name" value="GlycerAld_3-P_DH_AS"/>
</dbReference>
<dbReference type="InterPro" id="IPR020829">
    <property type="entry name" value="GlycerAld_3-P_DH_cat"/>
</dbReference>
<dbReference type="InterPro" id="IPR020828">
    <property type="entry name" value="GlycerAld_3-P_DH_NAD(P)-bd"/>
</dbReference>
<dbReference type="InterPro" id="IPR006424">
    <property type="entry name" value="Glyceraldehyde-3-P_DH_1"/>
</dbReference>
<dbReference type="InterPro" id="IPR036291">
    <property type="entry name" value="NAD(P)-bd_dom_sf"/>
</dbReference>
<dbReference type="NCBIfam" id="TIGR01534">
    <property type="entry name" value="GAPDH-I"/>
    <property type="match status" value="1"/>
</dbReference>
<dbReference type="PANTHER" id="PTHR10836">
    <property type="entry name" value="GLYCERALDEHYDE 3-PHOSPHATE DEHYDROGENASE"/>
    <property type="match status" value="1"/>
</dbReference>
<dbReference type="PANTHER" id="PTHR10836:SF111">
    <property type="entry name" value="GLYCERALDEHYDE-3-PHOSPHATE DEHYDROGENASE"/>
    <property type="match status" value="1"/>
</dbReference>
<dbReference type="Pfam" id="PF02800">
    <property type="entry name" value="Gp_dh_C"/>
    <property type="match status" value="1"/>
</dbReference>
<dbReference type="Pfam" id="PF00044">
    <property type="entry name" value="Gp_dh_N"/>
    <property type="match status" value="1"/>
</dbReference>
<dbReference type="PIRSF" id="PIRSF000149">
    <property type="entry name" value="GAP_DH"/>
    <property type="match status" value="1"/>
</dbReference>
<dbReference type="PRINTS" id="PR00078">
    <property type="entry name" value="G3PDHDRGNASE"/>
</dbReference>
<dbReference type="SMART" id="SM00846">
    <property type="entry name" value="Gp_dh_N"/>
    <property type="match status" value="1"/>
</dbReference>
<dbReference type="SUPFAM" id="SSF55347">
    <property type="entry name" value="Glyceraldehyde-3-phosphate dehydrogenase-like, C-terminal domain"/>
    <property type="match status" value="1"/>
</dbReference>
<dbReference type="SUPFAM" id="SSF51735">
    <property type="entry name" value="NAD(P)-binding Rossmann-fold domains"/>
    <property type="match status" value="1"/>
</dbReference>
<dbReference type="PROSITE" id="PS00071">
    <property type="entry name" value="GAPDH"/>
    <property type="match status" value="1"/>
</dbReference>
<name>G3P_PELSI</name>
<organism>
    <name type="scientific">Pelodiscus sinensis</name>
    <name type="common">Chinese softshell turtle</name>
    <name type="synonym">Trionyx sinensis</name>
    <dbReference type="NCBI Taxonomy" id="13735"/>
    <lineage>
        <taxon>Eukaryota</taxon>
        <taxon>Metazoa</taxon>
        <taxon>Chordata</taxon>
        <taxon>Craniata</taxon>
        <taxon>Vertebrata</taxon>
        <taxon>Euteleostomi</taxon>
        <taxon>Archelosauria</taxon>
        <taxon>Testudinata</taxon>
        <taxon>Testudines</taxon>
        <taxon>Cryptodira</taxon>
        <taxon>Trionychia</taxon>
        <taxon>Trionychidae</taxon>
        <taxon>Pelodiscus</taxon>
    </lineage>
</organism>
<comment type="function">
    <text evidence="1 2">Has both glyceraldehyde-3-phosphate dehydrogenase and nitrosylase activities, thereby playing a role in glycolysis and nuclear functions, respectively. Glyceraldehyde-3-phosphate dehydrogenase is a key enzyme in glycolysis that catalyzes the first step of the pathway by converting D-glyceraldehyde 3-phosphate (G3P) into 3-phospho-D-glyceroyl phosphate (By similarity). Participates in nuclear events including transcription, RNA transport, DNA replication and apoptosis. Nuclear functions are probably due to the nitrosylase activity that mediates cysteine S-nitrosylation of nuclear target proteins such as SIRT1, HDAC2 and PRKDC (By similarity).</text>
</comment>
<comment type="catalytic activity">
    <reaction evidence="1 4">
        <text>D-glyceraldehyde 3-phosphate + phosphate + NAD(+) = (2R)-3-phospho-glyceroyl phosphate + NADH + H(+)</text>
        <dbReference type="Rhea" id="RHEA:10300"/>
        <dbReference type="ChEBI" id="CHEBI:15378"/>
        <dbReference type="ChEBI" id="CHEBI:43474"/>
        <dbReference type="ChEBI" id="CHEBI:57540"/>
        <dbReference type="ChEBI" id="CHEBI:57604"/>
        <dbReference type="ChEBI" id="CHEBI:57945"/>
        <dbReference type="ChEBI" id="CHEBI:59776"/>
        <dbReference type="EC" id="1.2.1.12"/>
    </reaction>
</comment>
<comment type="catalytic activity">
    <reaction evidence="2">
        <text>S-nitroso-L-cysteinyl-[GAPDH] + L-cysteinyl-[protein] = L-cysteinyl-[GAPDH] + S-nitroso-L-cysteinyl-[protein]</text>
        <dbReference type="Rhea" id="RHEA:66684"/>
        <dbReference type="Rhea" id="RHEA-COMP:10131"/>
        <dbReference type="Rhea" id="RHEA-COMP:17089"/>
        <dbReference type="Rhea" id="RHEA-COMP:17090"/>
        <dbReference type="Rhea" id="RHEA-COMP:17091"/>
        <dbReference type="ChEBI" id="CHEBI:29950"/>
        <dbReference type="ChEBI" id="CHEBI:149494"/>
    </reaction>
    <physiologicalReaction direction="left-to-right" evidence="2">
        <dbReference type="Rhea" id="RHEA:66685"/>
    </physiologicalReaction>
</comment>
<comment type="pathway">
    <text>Carbohydrate degradation; glycolysis; pyruvate from D-glyceraldehyde 3-phosphate: step 1/5.</text>
</comment>
<comment type="subunit">
    <text evidence="1">Homotetramer.</text>
</comment>
<comment type="subcellular location">
    <subcellularLocation>
        <location evidence="2">Cytoplasm</location>
        <location evidence="2">Cytosol</location>
    </subcellularLocation>
    <subcellularLocation>
        <location evidence="2">Cytoplasm</location>
        <location evidence="2">Cytoskeleton</location>
    </subcellularLocation>
    <subcellularLocation>
        <location evidence="2">Nucleus</location>
    </subcellularLocation>
</comment>
<comment type="PTM">
    <text evidence="2">S-nitrosylation of Cys-150 leads to translocation to the nucleus.</text>
</comment>
<comment type="similarity">
    <text evidence="5">Belongs to the glyceraldehyde-3-phosphate dehydrogenase family.</text>
</comment>
<gene>
    <name type="primary">GAPDH</name>
</gene>
<evidence type="ECO:0000250" key="1">
    <source>
        <dbReference type="UniProtKB" id="P04406"/>
    </source>
</evidence>
<evidence type="ECO:0000250" key="2">
    <source>
        <dbReference type="UniProtKB" id="P04797"/>
    </source>
</evidence>
<evidence type="ECO:0000250" key="3">
    <source>
        <dbReference type="UniProtKB" id="P22513"/>
    </source>
</evidence>
<evidence type="ECO:0000255" key="4">
    <source>
        <dbReference type="PROSITE-ProRule" id="PRU10009"/>
    </source>
</evidence>
<evidence type="ECO:0000305" key="5"/>
<proteinExistence type="evidence at transcript level"/>
<feature type="chain" id="PRO_0000247818" description="Glyceraldehyde-3-phosphate dehydrogenase">
    <location>
        <begin position="1"/>
        <end position="333"/>
    </location>
</feature>
<feature type="active site" description="Nucleophile" evidence="4">
    <location>
        <position position="150"/>
    </location>
</feature>
<feature type="binding site" evidence="1">
    <location>
        <begin position="11"/>
        <end position="12"/>
    </location>
    <ligand>
        <name>NAD(+)</name>
        <dbReference type="ChEBI" id="CHEBI:57540"/>
    </ligand>
</feature>
<feature type="binding site" evidence="1">
    <location>
        <position position="33"/>
    </location>
    <ligand>
        <name>NAD(+)</name>
        <dbReference type="ChEBI" id="CHEBI:57540"/>
    </ligand>
</feature>
<feature type="binding site" evidence="1">
    <location>
        <position position="78"/>
    </location>
    <ligand>
        <name>NAD(+)</name>
        <dbReference type="ChEBI" id="CHEBI:57540"/>
    </ligand>
</feature>
<feature type="binding site" evidence="1">
    <location>
        <position position="120"/>
    </location>
    <ligand>
        <name>NAD(+)</name>
        <dbReference type="ChEBI" id="CHEBI:57540"/>
    </ligand>
</feature>
<feature type="binding site" evidence="3">
    <location>
        <begin position="149"/>
        <end position="151"/>
    </location>
    <ligand>
        <name>D-glyceraldehyde 3-phosphate</name>
        <dbReference type="ChEBI" id="CHEBI:59776"/>
    </ligand>
</feature>
<feature type="binding site" evidence="3">
    <location>
        <position position="180"/>
    </location>
    <ligand>
        <name>D-glyceraldehyde 3-phosphate</name>
        <dbReference type="ChEBI" id="CHEBI:59776"/>
    </ligand>
</feature>
<feature type="binding site" evidence="3">
    <location>
        <begin position="209"/>
        <end position="210"/>
    </location>
    <ligand>
        <name>D-glyceraldehyde 3-phosphate</name>
        <dbReference type="ChEBI" id="CHEBI:59776"/>
    </ligand>
</feature>
<feature type="binding site" evidence="3">
    <location>
        <position position="232"/>
    </location>
    <ligand>
        <name>D-glyceraldehyde 3-phosphate</name>
        <dbReference type="ChEBI" id="CHEBI:59776"/>
    </ligand>
</feature>
<feature type="binding site" evidence="1">
    <location>
        <position position="314"/>
    </location>
    <ligand>
        <name>NAD(+)</name>
        <dbReference type="ChEBI" id="CHEBI:57540"/>
    </ligand>
</feature>
<feature type="site" description="Activates thiol group during catalysis" evidence="1">
    <location>
        <position position="177"/>
    </location>
</feature>
<feature type="modified residue" description="S-nitrosocysteine" evidence="2">
    <location>
        <position position="150"/>
    </location>
</feature>